<evidence type="ECO:0000255" key="1"/>
<evidence type="ECO:0000256" key="2">
    <source>
        <dbReference type="SAM" id="MobiDB-lite"/>
    </source>
</evidence>
<evidence type="ECO:0000305" key="3"/>
<evidence type="ECO:0000305" key="4">
    <source>
    </source>
</evidence>
<protein>
    <recommendedName>
        <fullName>Putative uncharacterized protein YOR053W</fullName>
    </recommendedName>
</protein>
<reference key="1">
    <citation type="journal article" date="1997" name="Yeast">
        <title>The sequence of a 54.7 kb fragment of yeast chromosome XV reveals the presence of two tRNAs and 24 new open reading frames.</title>
        <authorList>
            <person name="Valens M."/>
            <person name="Bohn C."/>
            <person name="Daignan-Fornier B."/>
            <person name="Dang V.-D."/>
            <person name="Bolotin-Fukuhara M."/>
        </authorList>
    </citation>
    <scope>NUCLEOTIDE SEQUENCE [GENOMIC DNA]</scope>
    <source>
        <strain>ATCC 96604 / S288c / FY1679</strain>
    </source>
</reference>
<reference key="2">
    <citation type="journal article" date="1997" name="Nature">
        <title>The nucleotide sequence of Saccharomyces cerevisiae chromosome XV.</title>
        <authorList>
            <person name="Dujon B."/>
            <person name="Albermann K."/>
            <person name="Aldea M."/>
            <person name="Alexandraki D."/>
            <person name="Ansorge W."/>
            <person name="Arino J."/>
            <person name="Benes V."/>
            <person name="Bohn C."/>
            <person name="Bolotin-Fukuhara M."/>
            <person name="Bordonne R."/>
            <person name="Boyer J."/>
            <person name="Camasses A."/>
            <person name="Casamayor A."/>
            <person name="Casas C."/>
            <person name="Cheret G."/>
            <person name="Cziepluch C."/>
            <person name="Daignan-Fornier B."/>
            <person name="Dang V.-D."/>
            <person name="de Haan M."/>
            <person name="Delius H."/>
            <person name="Durand P."/>
            <person name="Fairhead C."/>
            <person name="Feldmann H."/>
            <person name="Gaillon L."/>
            <person name="Galisson F."/>
            <person name="Gamo F.-J."/>
            <person name="Gancedo C."/>
            <person name="Goffeau A."/>
            <person name="Goulding S.E."/>
            <person name="Grivell L.A."/>
            <person name="Habbig B."/>
            <person name="Hand N.J."/>
            <person name="Hani J."/>
            <person name="Hattenhorst U."/>
            <person name="Hebling U."/>
            <person name="Hernando Y."/>
            <person name="Herrero E."/>
            <person name="Heumann K."/>
            <person name="Hiesel R."/>
            <person name="Hilger F."/>
            <person name="Hofmann B."/>
            <person name="Hollenberg C.P."/>
            <person name="Hughes B."/>
            <person name="Jauniaux J.-C."/>
            <person name="Kalogeropoulos A."/>
            <person name="Katsoulou C."/>
            <person name="Kordes E."/>
            <person name="Lafuente M.J."/>
            <person name="Landt O."/>
            <person name="Louis E.J."/>
            <person name="Maarse A.C."/>
            <person name="Madania A."/>
            <person name="Mannhaupt G."/>
            <person name="Marck C."/>
            <person name="Martin R.P."/>
            <person name="Mewes H.-W."/>
            <person name="Michaux G."/>
            <person name="Paces V."/>
            <person name="Parle-McDermott A.G."/>
            <person name="Pearson B.M."/>
            <person name="Perrin A."/>
            <person name="Pettersson B."/>
            <person name="Poch O."/>
            <person name="Pohl T.M."/>
            <person name="Poirey R."/>
            <person name="Portetelle D."/>
            <person name="Pujol A."/>
            <person name="Purnelle B."/>
            <person name="Ramezani Rad M."/>
            <person name="Rechmann S."/>
            <person name="Schwager C."/>
            <person name="Schweizer M."/>
            <person name="Sor F."/>
            <person name="Sterky F."/>
            <person name="Tarassov I.A."/>
            <person name="Teodoru C."/>
            <person name="Tettelin H."/>
            <person name="Thierry A."/>
            <person name="Tobiasch E."/>
            <person name="Tzermia M."/>
            <person name="Uhlen M."/>
            <person name="Unseld M."/>
            <person name="Valens M."/>
            <person name="Vandenbol M."/>
            <person name="Vetter I."/>
            <person name="Vlcek C."/>
            <person name="Voet M."/>
            <person name="Volckaert G."/>
            <person name="Voss H."/>
            <person name="Wambutt R."/>
            <person name="Wedler H."/>
            <person name="Wiemann S."/>
            <person name="Winsor B."/>
            <person name="Wolfe K.H."/>
            <person name="Zollner A."/>
            <person name="Zumstein E."/>
            <person name="Kleine K."/>
        </authorList>
    </citation>
    <scope>NUCLEOTIDE SEQUENCE [LARGE SCALE GENOMIC DNA]</scope>
    <source>
        <strain>ATCC 204508 / S288c</strain>
    </source>
</reference>
<reference key="3">
    <citation type="journal article" date="2014" name="G3 (Bethesda)">
        <title>The reference genome sequence of Saccharomyces cerevisiae: Then and now.</title>
        <authorList>
            <person name="Engel S.R."/>
            <person name="Dietrich F.S."/>
            <person name="Fisk D.G."/>
            <person name="Binkley G."/>
            <person name="Balakrishnan R."/>
            <person name="Costanzo M.C."/>
            <person name="Dwight S.S."/>
            <person name="Hitz B.C."/>
            <person name="Karra K."/>
            <person name="Nash R.S."/>
            <person name="Weng S."/>
            <person name="Wong E.D."/>
            <person name="Lloyd P."/>
            <person name="Skrzypek M.S."/>
            <person name="Miyasato S.R."/>
            <person name="Simison M."/>
            <person name="Cherry J.M."/>
        </authorList>
    </citation>
    <scope>GENOME REANNOTATION</scope>
    <source>
        <strain>ATCC 204508 / S288c</strain>
    </source>
</reference>
<accession>Q08428</accession>
<accession>O00018</accession>
<feature type="chain" id="PRO_0000299707" description="Putative uncharacterized protein YOR053W">
    <location>
        <begin position="1"/>
        <end position="113"/>
    </location>
</feature>
<feature type="transmembrane region" description="Helical" evidence="1">
    <location>
        <begin position="4"/>
        <end position="26"/>
    </location>
</feature>
<feature type="region of interest" description="Disordered" evidence="2">
    <location>
        <begin position="32"/>
        <end position="74"/>
    </location>
</feature>
<keyword id="KW-0472">Membrane</keyword>
<keyword id="KW-0812">Transmembrane</keyword>
<keyword id="KW-1133">Transmembrane helix</keyword>
<proteinExistence type="uncertain"/>
<sequence>MKLVLFKIAVALLYLLSFFLHRLHLRLRHLHRRRRRRHHRRHHRRHHHHRRRRRRRRRRRRRHHRHHHHRHRRRRHYLHLYHQYRSSYYHPPHRYLHPLLLPFPQKHRDNHLV</sequence>
<gene>
    <name type="ordered locus">YOR053W</name>
    <name type="ORF">O2799</name>
    <name type="ORF">YOR29-04</name>
</gene>
<dbReference type="EMBL" id="Z70678">
    <property type="protein sequence ID" value="CAA94538.1"/>
    <property type="molecule type" value="Genomic_DNA"/>
</dbReference>
<dbReference type="EMBL" id="Z74961">
    <property type="protein sequence ID" value="CAA99245.1"/>
    <property type="molecule type" value="Genomic_DNA"/>
</dbReference>
<dbReference type="PIR" id="S66936">
    <property type="entry name" value="S66936"/>
</dbReference>
<dbReference type="SMR" id="Q08428"/>
<dbReference type="DIP" id="DIP-4596N"/>
<dbReference type="STRING" id="4932.YOR053W"/>
<dbReference type="PaxDb" id="4932-YOR053W"/>
<dbReference type="EnsemblFungi" id="YOR053W_mRNA">
    <property type="protein sequence ID" value="YOR053W"/>
    <property type="gene ID" value="YOR053W"/>
</dbReference>
<dbReference type="AGR" id="SGD:S000005579"/>
<dbReference type="SGD" id="S000005579">
    <property type="gene designation" value="YOR053W"/>
</dbReference>
<dbReference type="HOGENOM" id="CLU_171297_0_0_1"/>
<dbReference type="GO" id="GO:0016020">
    <property type="term" value="C:membrane"/>
    <property type="evidence" value="ECO:0007669"/>
    <property type="project" value="UniProtKB-SubCell"/>
</dbReference>
<organism>
    <name type="scientific">Saccharomyces cerevisiae (strain ATCC 204508 / S288c)</name>
    <name type="common">Baker's yeast</name>
    <dbReference type="NCBI Taxonomy" id="559292"/>
    <lineage>
        <taxon>Eukaryota</taxon>
        <taxon>Fungi</taxon>
        <taxon>Dikarya</taxon>
        <taxon>Ascomycota</taxon>
        <taxon>Saccharomycotina</taxon>
        <taxon>Saccharomycetes</taxon>
        <taxon>Saccharomycetales</taxon>
        <taxon>Saccharomycetaceae</taxon>
        <taxon>Saccharomyces</taxon>
    </lineage>
</organism>
<name>YOR53_YEAST</name>
<comment type="subcellular location">
    <subcellularLocation>
        <location evidence="3">Membrane</location>
        <topology evidence="3">Single-pass membrane protein</topology>
    </subcellularLocation>
</comment>
<comment type="miscellaneous">
    <text evidence="3">Almost completely overlaps VHS3.</text>
</comment>
<comment type="caution">
    <text evidence="4">Product of a dubious gene prediction unlikely to encode a functional protein. Because of that it is not part of the S.cerevisiae S288c complete/reference proteome set.</text>
</comment>